<protein>
    <recommendedName>
        <fullName>Non-homologous end-joining factor xrc4</fullName>
    </recommendedName>
</protein>
<proteinExistence type="evidence at protein level"/>
<dbReference type="EMBL" id="CU329670">
    <property type="protein sequence ID" value="CAB03602.2"/>
    <property type="molecule type" value="Genomic_DNA"/>
</dbReference>
<dbReference type="PIR" id="T39078">
    <property type="entry name" value="T39078"/>
</dbReference>
<dbReference type="RefSeq" id="NP_594125.2">
    <property type="nucleotide sequence ID" value="NM_001019549.3"/>
</dbReference>
<dbReference type="SMR" id="Q92361"/>
<dbReference type="BioGRID" id="278419">
    <property type="interactions" value="9"/>
</dbReference>
<dbReference type="ComplexPortal" id="CPX-25731">
    <property type="entry name" value="DNA ligase IV complex"/>
</dbReference>
<dbReference type="STRING" id="284812.Q92361"/>
<dbReference type="iPTMnet" id="Q92361"/>
<dbReference type="PaxDb" id="4896-SPAC6G9.16c.1"/>
<dbReference type="EnsemblFungi" id="SPAC6G9.16c.1">
    <property type="protein sequence ID" value="SPAC6G9.16c.1:pep"/>
    <property type="gene ID" value="SPAC6G9.16c"/>
</dbReference>
<dbReference type="GeneID" id="2541931"/>
<dbReference type="KEGG" id="spo:2541931"/>
<dbReference type="PomBase" id="SPAC6G9.16c"/>
<dbReference type="VEuPathDB" id="FungiDB:SPAC6G9.16c"/>
<dbReference type="HOGENOM" id="CLU_1111898_0_0_1"/>
<dbReference type="InParanoid" id="Q92361"/>
<dbReference type="OMA" id="PLRIAWF"/>
<dbReference type="PRO" id="PR:Q92361"/>
<dbReference type="Proteomes" id="UP000002485">
    <property type="component" value="Chromosome I"/>
</dbReference>
<dbReference type="GO" id="GO:0000785">
    <property type="term" value="C:chromatin"/>
    <property type="evidence" value="ECO:0000314"/>
    <property type="project" value="PomBase"/>
</dbReference>
<dbReference type="GO" id="GO:0005737">
    <property type="term" value="C:cytoplasm"/>
    <property type="evidence" value="ECO:0000314"/>
    <property type="project" value="PomBase"/>
</dbReference>
<dbReference type="GO" id="GO:0005829">
    <property type="term" value="C:cytosol"/>
    <property type="evidence" value="ECO:0007005"/>
    <property type="project" value="PomBase"/>
</dbReference>
<dbReference type="GO" id="GO:0032807">
    <property type="term" value="C:DNA ligase IV complex"/>
    <property type="evidence" value="ECO:0000353"/>
    <property type="project" value="PomBase"/>
</dbReference>
<dbReference type="GO" id="GO:0005634">
    <property type="term" value="C:nucleus"/>
    <property type="evidence" value="ECO:0000314"/>
    <property type="project" value="PomBase"/>
</dbReference>
<dbReference type="GO" id="GO:0006303">
    <property type="term" value="P:double-strand break repair via nonhomologous end joining"/>
    <property type="evidence" value="ECO:0000315"/>
    <property type="project" value="PomBase"/>
</dbReference>
<reference key="1">
    <citation type="journal article" date="2002" name="Nature">
        <title>The genome sequence of Schizosaccharomyces pombe.</title>
        <authorList>
            <person name="Wood V."/>
            <person name="Gwilliam R."/>
            <person name="Rajandream M.A."/>
            <person name="Lyne M.H."/>
            <person name="Lyne R."/>
            <person name="Stewart A."/>
            <person name="Sgouros J.G."/>
            <person name="Peat N."/>
            <person name="Hayles J."/>
            <person name="Baker S.G."/>
            <person name="Basham D."/>
            <person name="Bowman S."/>
            <person name="Brooks K."/>
            <person name="Brown D."/>
            <person name="Brown S."/>
            <person name="Chillingworth T."/>
            <person name="Churcher C.M."/>
            <person name="Collins M."/>
            <person name="Connor R."/>
            <person name="Cronin A."/>
            <person name="Davis P."/>
            <person name="Feltwell T."/>
            <person name="Fraser A."/>
            <person name="Gentles S."/>
            <person name="Goble A."/>
            <person name="Hamlin N."/>
            <person name="Harris D.E."/>
            <person name="Hidalgo J."/>
            <person name="Hodgson G."/>
            <person name="Holroyd S."/>
            <person name="Hornsby T."/>
            <person name="Howarth S."/>
            <person name="Huckle E.J."/>
            <person name="Hunt S."/>
            <person name="Jagels K."/>
            <person name="James K.D."/>
            <person name="Jones L."/>
            <person name="Jones M."/>
            <person name="Leather S."/>
            <person name="McDonald S."/>
            <person name="McLean J."/>
            <person name="Mooney P."/>
            <person name="Moule S."/>
            <person name="Mungall K.L."/>
            <person name="Murphy L.D."/>
            <person name="Niblett D."/>
            <person name="Odell C."/>
            <person name="Oliver K."/>
            <person name="O'Neil S."/>
            <person name="Pearson D."/>
            <person name="Quail M.A."/>
            <person name="Rabbinowitsch E."/>
            <person name="Rutherford K.M."/>
            <person name="Rutter S."/>
            <person name="Saunders D."/>
            <person name="Seeger K."/>
            <person name="Sharp S."/>
            <person name="Skelton J."/>
            <person name="Simmonds M.N."/>
            <person name="Squares R."/>
            <person name="Squares S."/>
            <person name="Stevens K."/>
            <person name="Taylor K."/>
            <person name="Taylor R.G."/>
            <person name="Tivey A."/>
            <person name="Walsh S.V."/>
            <person name="Warren T."/>
            <person name="Whitehead S."/>
            <person name="Woodward J.R."/>
            <person name="Volckaert G."/>
            <person name="Aert R."/>
            <person name="Robben J."/>
            <person name="Grymonprez B."/>
            <person name="Weltjens I."/>
            <person name="Vanstreels E."/>
            <person name="Rieger M."/>
            <person name="Schaefer M."/>
            <person name="Mueller-Auer S."/>
            <person name="Gabel C."/>
            <person name="Fuchs M."/>
            <person name="Duesterhoeft A."/>
            <person name="Fritzc C."/>
            <person name="Holzer E."/>
            <person name="Moestl D."/>
            <person name="Hilbert H."/>
            <person name="Borzym K."/>
            <person name="Langer I."/>
            <person name="Beck A."/>
            <person name="Lehrach H."/>
            <person name="Reinhardt R."/>
            <person name="Pohl T.M."/>
            <person name="Eger P."/>
            <person name="Zimmermann W."/>
            <person name="Wedler H."/>
            <person name="Wambutt R."/>
            <person name="Purnelle B."/>
            <person name="Goffeau A."/>
            <person name="Cadieu E."/>
            <person name="Dreano S."/>
            <person name="Gloux S."/>
            <person name="Lelaure V."/>
            <person name="Mottier S."/>
            <person name="Galibert F."/>
            <person name="Aves S.J."/>
            <person name="Xiang Z."/>
            <person name="Hunt C."/>
            <person name="Moore K."/>
            <person name="Hurst S.M."/>
            <person name="Lucas M."/>
            <person name="Rochet M."/>
            <person name="Gaillardin C."/>
            <person name="Tallada V.A."/>
            <person name="Garzon A."/>
            <person name="Thode G."/>
            <person name="Daga R.R."/>
            <person name="Cruzado L."/>
            <person name="Jimenez J."/>
            <person name="Sanchez M."/>
            <person name="del Rey F."/>
            <person name="Benito J."/>
            <person name="Dominguez A."/>
            <person name="Revuelta J.L."/>
            <person name="Moreno S."/>
            <person name="Armstrong J."/>
            <person name="Forsburg S.L."/>
            <person name="Cerutti L."/>
            <person name="Lowe T."/>
            <person name="McCombie W.R."/>
            <person name="Paulsen I."/>
            <person name="Potashkin J."/>
            <person name="Shpakovski G.V."/>
            <person name="Ussery D."/>
            <person name="Barrell B.G."/>
            <person name="Nurse P."/>
        </authorList>
    </citation>
    <scope>NUCLEOTIDE SEQUENCE [LARGE SCALE GENOMIC DNA]</scope>
    <source>
        <strain>972 / ATCC 24843</strain>
    </source>
</reference>
<reference key="2">
    <citation type="journal article" date="2014" name="G3 (Bethesda)">
        <title>Genome-wide screens for sensitivity to ionizing radiation identify the fission yeast nonhomologous end joining factor Xrc4.</title>
        <authorList>
            <person name="Li J."/>
            <person name="Yu Y."/>
            <person name="Suo F."/>
            <person name="Sun L.L."/>
            <person name="Zhao D."/>
            <person name="Du L.L."/>
        </authorList>
    </citation>
    <scope>FUNCTION</scope>
    <scope>INTERACTION WITH LIG4</scope>
    <scope>SUBCELLULAR LOCATION</scope>
    <scope>DISRUPTION PHENOTYPE</scope>
</reference>
<evidence type="ECO:0000256" key="1">
    <source>
        <dbReference type="SAM" id="MobiDB-lite"/>
    </source>
</evidence>
<evidence type="ECO:0000269" key="2">
    <source>
    </source>
</evidence>
<evidence type="ECO:0000303" key="3">
    <source>
    </source>
</evidence>
<evidence type="ECO:0000305" key="4"/>
<accession>Q92361</accession>
<feature type="chain" id="PRO_0000116631" description="Non-homologous end-joining factor xrc4">
    <location>
        <begin position="1"/>
        <end position="264"/>
    </location>
</feature>
<feature type="region of interest" description="Disordered" evidence="1">
    <location>
        <begin position="173"/>
        <end position="264"/>
    </location>
</feature>
<feature type="compositionally biased region" description="Basic and acidic residues" evidence="1">
    <location>
        <begin position="173"/>
        <end position="186"/>
    </location>
</feature>
<feature type="compositionally biased region" description="Polar residues" evidence="1">
    <location>
        <begin position="200"/>
        <end position="209"/>
    </location>
</feature>
<feature type="compositionally biased region" description="Basic and acidic residues" evidence="1">
    <location>
        <begin position="248"/>
        <end position="264"/>
    </location>
</feature>
<organism>
    <name type="scientific">Schizosaccharomyces pombe (strain 972 / ATCC 24843)</name>
    <name type="common">Fission yeast</name>
    <dbReference type="NCBI Taxonomy" id="284812"/>
    <lineage>
        <taxon>Eukaryota</taxon>
        <taxon>Fungi</taxon>
        <taxon>Dikarya</taxon>
        <taxon>Ascomycota</taxon>
        <taxon>Taphrinomycotina</taxon>
        <taxon>Schizosaccharomycetes</taxon>
        <taxon>Schizosaccharomycetales</taxon>
        <taxon>Schizosaccharomycetaceae</taxon>
        <taxon>Schizosaccharomyces</taxon>
    </lineage>
</organism>
<gene>
    <name evidence="3" type="primary">xrc4</name>
    <name type="ORF">SPAC6G9.16c</name>
</gene>
<comment type="function">
    <text evidence="2">Involved in double-strand break repair via non-homologous end joining (NHEJ); the repair of a double-strand break in DNA in which the two broken ends are rejoined with little or no sequence complementarity.</text>
</comment>
<comment type="subunit">
    <text evidence="2">Interacts with lig4; the interaction is direct.</text>
</comment>
<comment type="subcellular location">
    <subcellularLocation>
        <location evidence="2">Nucleus</location>
    </subcellularLocation>
</comment>
<comment type="disruption phenotype">
    <text evidence="2">Spores sensitive to ionizing radiation.</text>
</comment>
<comment type="similarity">
    <text evidence="4">Belongs to the XRCC4-XLF family. XRCC4 subfamily.</text>
</comment>
<name>XRCC4_SCHPO</name>
<keyword id="KW-0539">Nucleus</keyword>
<keyword id="KW-1185">Reference proteome</keyword>
<sequence>MKFFLSLKDFKGEKFVLRSELDESSAFLCAISPTCRYVLRDEIPWKRLQRNVTSESLTDELIVDLLCGRSESKHTLQLVVLENLCRIYINYVDPFPLRIAWFELEQQALKDHEHFDVLWECSHSIKDLALASMAQQKNELQKLMAYTEQLQEECKSRERKLIMKFADMIKNARNNEDNEDNHHINYEDESDVGTDEQKQQEGVNSSAVSDTDESAVSDEFMQIKEEFPMKALSASPTADASPESAGEDDSHRRSSHESSETVSE</sequence>